<reference key="1">
    <citation type="journal article" date="1995" name="Mol. Microbiol.">
        <title>Regulation of anaerobic citrate metabolism in Klebsiella pneumoniae.</title>
        <authorList>
            <person name="Bott M."/>
            <person name="Meyer M."/>
            <person name="Dimroth P."/>
        </authorList>
    </citation>
    <scope>NUCLEOTIDE SEQUENCE [GENOMIC DNA]</scope>
    <source>
        <strain>ATCC 13882 / NBRC 13541 / NCTC 8172</strain>
    </source>
</reference>
<reference key="2">
    <citation type="journal article" date="1997" name="J. Mol. Biol.">
        <title>In vitro binding of the response regulator CitB and of its carboxy-terminal domain to A + T-rich DNA target sequences in the control region of the divergent citC and citS operons of Klebsiella pneumoniae.</title>
        <authorList>
            <person name="Meyer M."/>
            <person name="Dimroth P."/>
            <person name="Bott M."/>
        </authorList>
    </citation>
    <scope>PROTEIN SEQUENCE OF 1-6</scope>
    <scope>CHARACTERIZATION</scope>
    <source>
        <strain>ATCC 13882 / NBRC 13541 / NCTC 8172</strain>
    </source>
</reference>
<reference key="3">
    <citation type="journal article" date="1999" name="Mol. Microbiol.">
        <title>The periplasmic domain of the histidine autokinase CitA functions as a highly specific citrate receptor.</title>
        <authorList>
            <person name="Kaspar S."/>
            <person name="Perozzo R."/>
            <person name="Reinelt S."/>
            <person name="Meyer M."/>
            <person name="Pfister K."/>
            <person name="Scapozza L."/>
            <person name="Bott M."/>
        </authorList>
    </citation>
    <scope>FUNCTION</scope>
    <scope>PHOSPHORYLATION AT ASP-56</scope>
    <scope>CHARACTERIZATION</scope>
    <scope>MUTAGENESIS OF ASP-56</scope>
    <source>
        <strain>ATCC 13882 / NBRC 13541 / NCTC 8172</strain>
    </source>
</reference>
<feature type="chain" id="PRO_0000081072" description="Transcriptional regulatory protein CitB">
    <location>
        <begin position="1"/>
        <end position="234"/>
    </location>
</feature>
<feature type="domain" description="Response regulatory" evidence="2">
    <location>
        <begin position="5"/>
        <end position="121"/>
    </location>
</feature>
<feature type="DNA-binding region" description="H-T-H motif" evidence="1">
    <location>
        <begin position="181"/>
        <end position="200"/>
    </location>
</feature>
<feature type="modified residue" description="4-aspartylphosphate" evidence="2 3">
    <location>
        <position position="56"/>
    </location>
</feature>
<feature type="mutagenesis site" description="Loss of phosphorylation." evidence="3">
    <original>D</original>
    <variation>N</variation>
    <location>
        <position position="56"/>
    </location>
</feature>
<evidence type="ECO:0000250" key="1"/>
<evidence type="ECO:0000255" key="2">
    <source>
        <dbReference type="PROSITE-ProRule" id="PRU00169"/>
    </source>
</evidence>
<evidence type="ECO:0000269" key="3">
    <source>
    </source>
</evidence>
<evidence type="ECO:0000305" key="4"/>
<gene>
    <name type="primary">citB</name>
</gene>
<keyword id="KW-0010">Activator</keyword>
<keyword id="KW-0963">Cytoplasm</keyword>
<keyword id="KW-0903">Direct protein sequencing</keyword>
<keyword id="KW-0238">DNA-binding</keyword>
<keyword id="KW-0597">Phosphoprotein</keyword>
<keyword id="KW-0804">Transcription</keyword>
<keyword id="KW-0805">Transcription regulation</keyword>
<keyword id="KW-0902">Two-component regulatory system</keyword>
<organism>
    <name type="scientific">Klebsiella pneumoniae</name>
    <dbReference type="NCBI Taxonomy" id="573"/>
    <lineage>
        <taxon>Bacteria</taxon>
        <taxon>Pseudomonadati</taxon>
        <taxon>Pseudomonadota</taxon>
        <taxon>Gammaproteobacteria</taxon>
        <taxon>Enterobacterales</taxon>
        <taxon>Enterobacteriaceae</taxon>
        <taxon>Klebsiella/Raoultella group</taxon>
        <taxon>Klebsiella</taxon>
        <taxon>Klebsiella pneumoniae complex</taxon>
    </lineage>
</organism>
<dbReference type="EMBL" id="U31464">
    <property type="protein sequence ID" value="AAC44734.1"/>
    <property type="molecule type" value="Genomic_DNA"/>
</dbReference>
<dbReference type="PIR" id="S70539">
    <property type="entry name" value="S70539"/>
</dbReference>
<dbReference type="RefSeq" id="WP_004222618.1">
    <property type="nucleotide sequence ID" value="NZ_WYAL01000019.1"/>
</dbReference>
<dbReference type="SMR" id="P52688"/>
<dbReference type="GO" id="GO:0005737">
    <property type="term" value="C:cytoplasm"/>
    <property type="evidence" value="ECO:0007669"/>
    <property type="project" value="UniProtKB-SubCell"/>
</dbReference>
<dbReference type="GO" id="GO:0003677">
    <property type="term" value="F:DNA binding"/>
    <property type="evidence" value="ECO:0007669"/>
    <property type="project" value="UniProtKB-KW"/>
</dbReference>
<dbReference type="GO" id="GO:0003700">
    <property type="term" value="F:DNA-binding transcription factor activity"/>
    <property type="evidence" value="ECO:0007669"/>
    <property type="project" value="InterPro"/>
</dbReference>
<dbReference type="GO" id="GO:0000156">
    <property type="term" value="F:phosphorelay response regulator activity"/>
    <property type="evidence" value="ECO:0007669"/>
    <property type="project" value="TreeGrafter"/>
</dbReference>
<dbReference type="CDD" id="cd19925">
    <property type="entry name" value="REC_citrate_TCS"/>
    <property type="match status" value="1"/>
</dbReference>
<dbReference type="FunFam" id="3.40.50.2300:FF:000057">
    <property type="entry name" value="Transcriptional regulatory protein"/>
    <property type="match status" value="1"/>
</dbReference>
<dbReference type="Gene3D" id="3.40.50.2300">
    <property type="match status" value="1"/>
</dbReference>
<dbReference type="InterPro" id="IPR051271">
    <property type="entry name" value="2C-system_Tx_regulators"/>
</dbReference>
<dbReference type="InterPro" id="IPR011006">
    <property type="entry name" value="CheY-like_superfamily"/>
</dbReference>
<dbReference type="InterPro" id="IPR048714">
    <property type="entry name" value="DpiA-like_HTH"/>
</dbReference>
<dbReference type="InterPro" id="IPR024187">
    <property type="entry name" value="Sig_transdc_resp-reg_cit/mal"/>
</dbReference>
<dbReference type="InterPro" id="IPR001789">
    <property type="entry name" value="Sig_transdc_resp-reg_receiver"/>
</dbReference>
<dbReference type="PANTHER" id="PTHR45526:SF1">
    <property type="entry name" value="TRANSCRIPTIONAL REGULATORY PROTEIN DCUR-RELATED"/>
    <property type="match status" value="1"/>
</dbReference>
<dbReference type="PANTHER" id="PTHR45526">
    <property type="entry name" value="TRANSCRIPTIONAL REGULATORY PROTEIN DPIA"/>
    <property type="match status" value="1"/>
</dbReference>
<dbReference type="Pfam" id="PF20714">
    <property type="entry name" value="HTH_64"/>
    <property type="match status" value="1"/>
</dbReference>
<dbReference type="Pfam" id="PF00072">
    <property type="entry name" value="Response_reg"/>
    <property type="match status" value="1"/>
</dbReference>
<dbReference type="PIRSF" id="PIRSF006171">
    <property type="entry name" value="RR_citrat_malat"/>
    <property type="match status" value="1"/>
</dbReference>
<dbReference type="SMART" id="SM00448">
    <property type="entry name" value="REC"/>
    <property type="match status" value="1"/>
</dbReference>
<dbReference type="SUPFAM" id="SSF52172">
    <property type="entry name" value="CheY-like"/>
    <property type="match status" value="1"/>
</dbReference>
<dbReference type="PROSITE" id="PS50110">
    <property type="entry name" value="RESPONSE_REGULATORY"/>
    <property type="match status" value="1"/>
</dbReference>
<sequence length="234" mass="26821">MDSITTLIVEDEPMLAEILVDNIKQFPQFDVIGIADKLESARKQLRLYQPQLILLDNFLPDGKGIDLIRHAVSTHYKGRIIFITADNHMETISEALRLGVFDYLIKPVHYQRLQHTLERFARYRSSLRSSEQASQLHVDALFNIQAREQTEPASAPLRGIDESTFQRVLQLFADPTVVHTADSLARILGSSKTTARRYLEQGVKNDFLEAEISYGKVGRPERIYHGKQTYPEQR</sequence>
<name>CITB_KLEPN</name>
<protein>
    <recommendedName>
        <fullName>Transcriptional regulatory protein CitB</fullName>
    </recommendedName>
</protein>
<proteinExistence type="evidence at protein level"/>
<comment type="function">
    <text evidence="3">Member of the two-component regulatory system CitA/CitB essential for expression of citrate-specific fermentation genes. Phosphorylated CitB binds to two sites in the citS-citC intergenic region where it probably activates transcription of both genes.</text>
</comment>
<comment type="subunit">
    <text>In vitro CitB and the CitA kinase domain form a complex, formation of which is enhanced by ATP.</text>
</comment>
<comment type="subcellular location">
    <subcellularLocation>
        <location evidence="4">Cytoplasm</location>
    </subcellularLocation>
</comment>
<comment type="PTM">
    <text evidence="3">Phosphorylated by CitA.</text>
</comment>
<accession>P52688</accession>